<sequence length="843" mass="94062">MTSDTIRQTLDELLLDKNGGSSNEARAFFLSQIIDQLKLISSQTDAERQLQKLQLKDPNDNIVKATPPPPPPPPPLISILQQAPPPPPPPPPPTLKAPPPPPILGLKTPSKSLKTPTPRPKECPTSFLPKKEKKTKTRTVQWSKINASVVQDDSVWGKLAKASNVDIDFDLLDNFFGIESLAVSGAAEVVKKSTRKDAHVELLTAKRSQNVAIMLKQFKNIDELIDDVSQNKPVAEIDALQNLFGMLPQSEEEEALRRYTGDISLLSPPSSFFYRLVQIQFYRLRIETQIFLSDFSRLMRELAPNVEILIRTSQEILTSPTLPRLLLIFVNMGNYLNGNNSQGNAFGFTLNSLWKLIDLKGNKQEFSLLHLLVTCEPDLVAHLQEELSTLKDASQISFDEIKISLKTLRDGRCKLEKQLETCSGASFTQFLELIKIDCKFELDEFGANYDKLTELQYQLADYFCENRNTFQLDECLKIFNFLMNRLQQTLKEHVTRETRKLKKEEKKETQTTRECEKTMKKPEKIDLFDALTASNGGPESPRKRAAGILDMRQKLGNVRIRKLRDVTTLESSFTPPPPPPLESPTDSTSSKENESVKPAKTSTNYEMCNDLESYITSLTRKRASHLPKAPPKEEPKLPEVLPEKSKIALKIEKIPEKIDKPPLPQAAPIIPKLPQKSIKAPSTVTTRSKVPPPTAAAAVRIVSVTTTTTPTKTAELRKPGARSPKTTVATVPKVTVVPVSRVPVAPSTPLSRRMSAPVVRKPTMTAEKKREITMKPSVSTSARPSLINTSSHPMVRSPLPKMSVLEKPKPLRITRPTVIPQSPTVTSSARPSGLRQPAKPKWV</sequence>
<accession>Q9TYU9</accession>
<keyword id="KW-0009">Actin-binding</keyword>
<keyword id="KW-0963">Cytoplasm</keyword>
<keyword id="KW-0206">Cytoskeleton</keyword>
<keyword id="KW-0493">Microtubule</keyword>
<keyword id="KW-1185">Reference proteome</keyword>
<name>EXC6_CAEEL</name>
<organism evidence="5">
    <name type="scientific">Caenorhabditis elegans</name>
    <dbReference type="NCBI Taxonomy" id="6239"/>
    <lineage>
        <taxon>Eukaryota</taxon>
        <taxon>Metazoa</taxon>
        <taxon>Ecdysozoa</taxon>
        <taxon>Nematoda</taxon>
        <taxon>Chromadorea</taxon>
        <taxon>Rhabditida</taxon>
        <taxon>Rhabditina</taxon>
        <taxon>Rhabditomorpha</taxon>
        <taxon>Rhabditoidea</taxon>
        <taxon>Rhabditidae</taxon>
        <taxon>Peloderinae</taxon>
        <taxon>Caenorhabditis</taxon>
    </lineage>
</organism>
<protein>
    <recommendedName>
        <fullName evidence="6">Excretory canal abnormal protein 6</fullName>
    </recommendedName>
</protein>
<dbReference type="EMBL" id="BX284603">
    <property type="protein sequence ID" value="CCD72047.2"/>
    <property type="molecule type" value="Genomic_DNA"/>
</dbReference>
<dbReference type="RefSeq" id="NP_497334.2">
    <property type="nucleotide sequence ID" value="NM_064933.5"/>
</dbReference>
<dbReference type="SMR" id="Q9TYU9"/>
<dbReference type="FunCoup" id="Q9TYU9">
    <property type="interactions" value="8"/>
</dbReference>
<dbReference type="IntAct" id="Q9TYU9">
    <property type="interactions" value="2"/>
</dbReference>
<dbReference type="STRING" id="6239.F58B6.2.1"/>
<dbReference type="PaxDb" id="6239-F58B6.2"/>
<dbReference type="PeptideAtlas" id="Q9TYU9"/>
<dbReference type="EnsemblMetazoa" id="F58B6.2.1">
    <property type="protein sequence ID" value="F58B6.2.1"/>
    <property type="gene ID" value="WBGene00019030"/>
</dbReference>
<dbReference type="GeneID" id="175277"/>
<dbReference type="KEGG" id="cel:CELE_F58B6.2"/>
<dbReference type="UCSC" id="F58B6.2">
    <property type="organism name" value="c. elegans"/>
</dbReference>
<dbReference type="AGR" id="WB:WBGene00019030"/>
<dbReference type="CTD" id="175277"/>
<dbReference type="WormBase" id="F58B6.2">
    <property type="protein sequence ID" value="CE46968"/>
    <property type="gene ID" value="WBGene00019030"/>
    <property type="gene designation" value="exc-6"/>
</dbReference>
<dbReference type="eggNOG" id="KOG1922">
    <property type="taxonomic scope" value="Eukaryota"/>
</dbReference>
<dbReference type="GeneTree" id="ENSGT00940000171596"/>
<dbReference type="HOGENOM" id="CLU_016554_0_0_1"/>
<dbReference type="InParanoid" id="Q9TYU9"/>
<dbReference type="OMA" id="MIDFFCE"/>
<dbReference type="OrthoDB" id="26518at2759"/>
<dbReference type="PRO" id="PR:Q9TYU9"/>
<dbReference type="Proteomes" id="UP000001940">
    <property type="component" value="Chromosome III"/>
</dbReference>
<dbReference type="Bgee" id="WBGene00019030">
    <property type="expression patterns" value="Expressed in pharyngeal muscle cell (C elegans) and 3 other cell types or tissues"/>
</dbReference>
<dbReference type="GO" id="GO:0005884">
    <property type="term" value="C:actin filament"/>
    <property type="evidence" value="ECO:0000318"/>
    <property type="project" value="GO_Central"/>
</dbReference>
<dbReference type="GO" id="GO:0005737">
    <property type="term" value="C:cytoplasm"/>
    <property type="evidence" value="ECO:0007669"/>
    <property type="project" value="UniProtKB-KW"/>
</dbReference>
<dbReference type="GO" id="GO:0031941">
    <property type="term" value="C:filamentous actin"/>
    <property type="evidence" value="ECO:0000314"/>
    <property type="project" value="UniProtKB"/>
</dbReference>
<dbReference type="GO" id="GO:0005874">
    <property type="term" value="C:microtubule"/>
    <property type="evidence" value="ECO:0007669"/>
    <property type="project" value="UniProtKB-KW"/>
</dbReference>
<dbReference type="GO" id="GO:0003779">
    <property type="term" value="F:actin binding"/>
    <property type="evidence" value="ECO:0007669"/>
    <property type="project" value="UniProtKB-KW"/>
</dbReference>
<dbReference type="GO" id="GO:0030041">
    <property type="term" value="P:actin filament polymerization"/>
    <property type="evidence" value="ECO:0000318"/>
    <property type="project" value="GO_Central"/>
</dbReference>
<dbReference type="GO" id="GO:0002064">
    <property type="term" value="P:epithelial cell development"/>
    <property type="evidence" value="ECO:0000315"/>
    <property type="project" value="WormBase"/>
</dbReference>
<dbReference type="GO" id="GO:0060562">
    <property type="term" value="P:epithelial tube morphogenesis"/>
    <property type="evidence" value="ECO:0000315"/>
    <property type="project" value="UniProtKB"/>
</dbReference>
<dbReference type="GO" id="GO:1904531">
    <property type="term" value="P:positive regulation of actin filament binding"/>
    <property type="evidence" value="ECO:0000315"/>
    <property type="project" value="UniProtKB"/>
</dbReference>
<dbReference type="GO" id="GO:0031113">
    <property type="term" value="P:regulation of microtubule polymerization"/>
    <property type="evidence" value="ECO:0000315"/>
    <property type="project" value="UniProtKB"/>
</dbReference>
<dbReference type="GO" id="GO:0035150">
    <property type="term" value="P:regulation of tube size"/>
    <property type="evidence" value="ECO:0000315"/>
    <property type="project" value="WormBase"/>
</dbReference>
<dbReference type="Gene3D" id="1.20.58.2220">
    <property type="entry name" value="Formin, FH2 domain"/>
    <property type="match status" value="1"/>
</dbReference>
<dbReference type="InterPro" id="IPR015425">
    <property type="entry name" value="FH2_Formin"/>
</dbReference>
<dbReference type="InterPro" id="IPR042201">
    <property type="entry name" value="FH2_Formin_sf"/>
</dbReference>
<dbReference type="PANTHER" id="PTHR46345:SF8">
    <property type="entry name" value="FORMIN 3, ISOFORM B"/>
    <property type="match status" value="1"/>
</dbReference>
<dbReference type="PANTHER" id="PTHR46345">
    <property type="entry name" value="INVERTED FORMIN-2"/>
    <property type="match status" value="1"/>
</dbReference>
<dbReference type="Pfam" id="PF02181">
    <property type="entry name" value="FH2"/>
    <property type="match status" value="1"/>
</dbReference>
<dbReference type="SMART" id="SM00498">
    <property type="entry name" value="FH2"/>
    <property type="match status" value="1"/>
</dbReference>
<dbReference type="SUPFAM" id="SSF101447">
    <property type="entry name" value="Formin homology 2 domain (FH2 domain)"/>
    <property type="match status" value="1"/>
</dbReference>
<dbReference type="PROSITE" id="PS51444">
    <property type="entry name" value="FH2"/>
    <property type="match status" value="1"/>
</dbReference>
<reference evidence="5" key="1">
    <citation type="journal article" date="1998" name="Science">
        <title>Genome sequence of the nematode C. elegans: a platform for investigating biology.</title>
        <authorList>
            <consortium name="The C. elegans sequencing consortium"/>
        </authorList>
    </citation>
    <scope>NUCLEOTIDE SEQUENCE [LARGE SCALE GENOMIC DNA]</scope>
    <source>
        <strain evidence="5">Bristol N2</strain>
    </source>
</reference>
<reference evidence="4" key="2">
    <citation type="journal article" date="2015" name="Dev. Cell">
        <title>The disease-associated formin INF2/EXC-6 organizes lumen and cell outgrowth during tubulogenesis by regulating F-actin and microtubule cytoskeletons.</title>
        <authorList>
            <person name="Shaye D.D."/>
            <person name="Greenwald I."/>
        </authorList>
    </citation>
    <scope>FUNCTION</scope>
    <scope>SUBCELLULAR LOCATION</scope>
    <scope>TISSUE SPECIFICITY</scope>
    <scope>DISRUPTION PHENOTYPE</scope>
    <scope>MUTAGENESIS OF ILE-213; LYS-360 AND GLY-361</scope>
</reference>
<evidence type="ECO:0000255" key="1">
    <source>
        <dbReference type="PROSITE-ProRule" id="PRU00774"/>
    </source>
</evidence>
<evidence type="ECO:0000256" key="2">
    <source>
        <dbReference type="SAM" id="MobiDB-lite"/>
    </source>
</evidence>
<evidence type="ECO:0000269" key="3">
    <source>
    </source>
</evidence>
<evidence type="ECO:0000305" key="4"/>
<evidence type="ECO:0000312" key="5">
    <source>
        <dbReference type="Proteomes" id="UP000001940"/>
    </source>
</evidence>
<evidence type="ECO:0000312" key="6">
    <source>
        <dbReference type="WormBase" id="F58B6.2"/>
    </source>
</evidence>
<comment type="function">
    <text evidence="3">Constitutively active protein required for microtubule and F-actin growth, structural maintenance and organization during excretory cell tubulogenesis.</text>
</comment>
<comment type="interaction">
    <interactant intactId="EBI-2317613">
        <id>Q9TYU9</id>
    </interactant>
    <interactant intactId="EBI-325337">
        <id>G5EC32</id>
        <label>sorb-1</label>
    </interactant>
    <organismsDiffer>false</organismsDiffer>
    <experiments>4</experiments>
</comment>
<comment type="subcellular location">
    <subcellularLocation>
        <location evidence="3">Cytoplasm</location>
        <location evidence="3">Cytoskeleton</location>
    </subcellularLocation>
    <text evidence="3">Localizes to leading edge F-actin and microtubules.</text>
</comment>
<comment type="tissue specificity">
    <text evidence="3">Expressed in the excretory cell and mostly accumulates at the tip of the excretory cell canals.</text>
</comment>
<comment type="disruption phenotype">
    <text evidence="3">Defective cytoskeleton organization characterized by disrupted F-actin and microtubule dynamics leading to abnormal excretory cell tubulogenesis. Specifically, F-actin structure and organization in excretory cell canals throughout life is disrupted and microtubule organizing centers accumulate at the tips of excretory cell canals, with a strong reduction along the canals, and the direction of microtubule growth is altered.</text>
</comment>
<comment type="similarity">
    <text evidence="4">Belongs to the formin homology family.</text>
</comment>
<proteinExistence type="evidence at protein level"/>
<gene>
    <name evidence="6" type="primary">exc-6</name>
    <name evidence="6" type="synonym">inft-1</name>
    <name evidence="6" type="ORF">F58B6.2</name>
</gene>
<feature type="chain" id="PRO_0000433781" description="Excretory canal abnormal protein 6" evidence="4">
    <location>
        <begin position="1"/>
        <end position="843"/>
    </location>
</feature>
<feature type="domain" description="FH2" evidence="1">
    <location>
        <begin position="127"/>
        <end position="512"/>
    </location>
</feature>
<feature type="region of interest" description="Disordered" evidence="2">
    <location>
        <begin position="54"/>
        <end position="135"/>
    </location>
</feature>
<feature type="region of interest" description="Disordered" evidence="2">
    <location>
        <begin position="568"/>
        <end position="601"/>
    </location>
</feature>
<feature type="region of interest" description="Disordered" evidence="2">
    <location>
        <begin position="748"/>
        <end position="767"/>
    </location>
</feature>
<feature type="region of interest" description="Disordered" evidence="2">
    <location>
        <begin position="773"/>
        <end position="843"/>
    </location>
</feature>
<feature type="compositionally biased region" description="Pro residues" evidence="2">
    <location>
        <begin position="66"/>
        <end position="76"/>
    </location>
</feature>
<feature type="compositionally biased region" description="Pro residues" evidence="2">
    <location>
        <begin position="83"/>
        <end position="103"/>
    </location>
</feature>
<feature type="compositionally biased region" description="Polar residues" evidence="2">
    <location>
        <begin position="776"/>
        <end position="792"/>
    </location>
</feature>
<feature type="compositionally biased region" description="Polar residues" evidence="2">
    <location>
        <begin position="819"/>
        <end position="830"/>
    </location>
</feature>
<feature type="mutagenesis site" description="Loss of actin binding and organization." evidence="3">
    <original>I</original>
    <variation>A</variation>
    <location>
        <position position="213"/>
    </location>
</feature>
<feature type="mutagenesis site" description="Loss of actin binding and organization." evidence="3">
    <original>K</original>
    <variation>A</variation>
    <location>
        <position position="360"/>
    </location>
</feature>
<feature type="mutagenesis site" description="In rh103; excretory canal tubulogenesis defects including shortened canals with multiple lumens and increased canal width." evidence="3">
    <original>G</original>
    <variation>E</variation>
    <location>
        <position position="361"/>
    </location>
</feature>